<name>HMP_DEIRA</name>
<comment type="catalytic activity">
    <reaction evidence="1">
        <text>2 nitric oxide + NADPH + 2 O2 = 2 nitrate + NADP(+) + H(+)</text>
        <dbReference type="Rhea" id="RHEA:19465"/>
        <dbReference type="ChEBI" id="CHEBI:15378"/>
        <dbReference type="ChEBI" id="CHEBI:15379"/>
        <dbReference type="ChEBI" id="CHEBI:16480"/>
        <dbReference type="ChEBI" id="CHEBI:17632"/>
        <dbReference type="ChEBI" id="CHEBI:57783"/>
        <dbReference type="ChEBI" id="CHEBI:58349"/>
        <dbReference type="EC" id="1.14.12.17"/>
    </reaction>
</comment>
<comment type="catalytic activity">
    <reaction evidence="1">
        <text>2 nitric oxide + NADH + 2 O2 = 2 nitrate + NAD(+) + H(+)</text>
        <dbReference type="Rhea" id="RHEA:19469"/>
        <dbReference type="ChEBI" id="CHEBI:15378"/>
        <dbReference type="ChEBI" id="CHEBI:15379"/>
        <dbReference type="ChEBI" id="CHEBI:16480"/>
        <dbReference type="ChEBI" id="CHEBI:17632"/>
        <dbReference type="ChEBI" id="CHEBI:57540"/>
        <dbReference type="ChEBI" id="CHEBI:57945"/>
        <dbReference type="EC" id="1.14.12.17"/>
    </reaction>
</comment>
<comment type="cofactor">
    <cofactor evidence="1">
        <name>heme b</name>
        <dbReference type="ChEBI" id="CHEBI:60344"/>
    </cofactor>
    <text evidence="1">Binds 1 heme b (iron(II)-protoporphyrin IX) group per subunit.</text>
</comment>
<comment type="cofactor">
    <cofactor evidence="1">
        <name>FAD</name>
        <dbReference type="ChEBI" id="CHEBI:57692"/>
    </cofactor>
    <text evidence="1">Binds 1 FAD per subunit.</text>
</comment>
<comment type="domain">
    <text>Consists of two distinct domains; an N-terminal heme-containing oxygen-binding domain and a C-terminal reductase domain with binding sites for FAD and NAD(P)H.</text>
</comment>
<comment type="similarity">
    <text evidence="1">Belongs to the globin family. Two-domain flavohemoproteins subfamily.</text>
</comment>
<comment type="similarity">
    <text evidence="1">In the C-terminal section; belongs to the flavoprotein pyridine nucleotide cytochrome reductase family.</text>
</comment>
<accession>Q9RYR5</accession>
<protein>
    <recommendedName>
        <fullName evidence="1">Flavohemoprotein</fullName>
    </recommendedName>
    <alternativeName>
        <fullName evidence="1">Flavohemoglobin</fullName>
    </alternativeName>
    <alternativeName>
        <fullName evidence="1">Hemoglobin-like protein</fullName>
    </alternativeName>
    <alternativeName>
        <fullName evidence="1">Nitric oxide dioxygenase</fullName>
        <shortName evidence="1">NO oxygenase</shortName>
        <shortName evidence="1">NOD</shortName>
        <ecNumber evidence="1">1.14.12.17</ecNumber>
    </alternativeName>
</protein>
<sequence length="403" mass="43296">MLTPEQKAIVKATVPALEAHGETITRTFYASMFAAHPELLNIFNPANQQTGKQARSLAASVLAYAAHIDHPEALGGMVGRIAHKHVSLEVLPEHYPIVGQYLLGAIAGVLGDAAKPEILDAWAAAYGELADLMIGIEKGMYDAGAGQPGGWRDFRPFRVARKVAESRVITSFVLEPVGGGALPAYQPGQYLSLKVKVPGQERWQIRQYSLSDAPSPDHYRISVKREGGGLVSEYLHGAVQEGDELLVHVPAGDFVLQQSERPVVLISAGVGITPMLAMVQTLAQAGSQRPVTFIHAAQNGSVHAFRDDVARLTHEYPHFRKVVFYDEAGPDDQLGTHHDVAGRLSLDAVRGALPAGEAEFYYCGPAGFAGAVEAILDDLQVPAERRFTETFGPSQSFAPVILG</sequence>
<feature type="chain" id="PRO_0000052430" description="Flavohemoprotein">
    <location>
        <begin position="1"/>
        <end position="403"/>
    </location>
</feature>
<feature type="domain" description="Globin" evidence="2">
    <location>
        <begin position="1"/>
        <end position="138"/>
    </location>
</feature>
<feature type="domain" description="FAD-binding FR-type" evidence="1">
    <location>
        <begin position="152"/>
        <end position="257"/>
    </location>
</feature>
<feature type="region of interest" description="Reductase">
    <location>
        <begin position="149"/>
        <end position="403"/>
    </location>
</feature>
<feature type="active site" description="Charge relay system" evidence="1">
    <location>
        <position position="95"/>
    </location>
</feature>
<feature type="active site" description="Charge relay system" evidence="1">
    <location>
        <position position="137"/>
    </location>
</feature>
<feature type="binding site" description="proximal binding residue" evidence="1">
    <location>
        <position position="85"/>
    </location>
    <ligand>
        <name>heme b</name>
        <dbReference type="ChEBI" id="CHEBI:60344"/>
    </ligand>
    <ligandPart>
        <name>Fe</name>
        <dbReference type="ChEBI" id="CHEBI:18248"/>
    </ligandPart>
</feature>
<feature type="binding site" evidence="1">
    <location>
        <position position="190"/>
    </location>
    <ligand>
        <name>FAD</name>
        <dbReference type="ChEBI" id="CHEBI:57692"/>
    </ligand>
</feature>
<feature type="binding site" evidence="1">
    <location>
        <begin position="206"/>
        <end position="209"/>
    </location>
    <ligand>
        <name>FAD</name>
        <dbReference type="ChEBI" id="CHEBI:57692"/>
    </ligand>
</feature>
<feature type="binding site" evidence="1">
    <location>
        <begin position="269"/>
        <end position="274"/>
    </location>
    <ligand>
        <name>NADP(+)</name>
        <dbReference type="ChEBI" id="CHEBI:58349"/>
    </ligand>
</feature>
<feature type="binding site" evidence="1">
    <location>
        <begin position="390"/>
        <end position="393"/>
    </location>
    <ligand>
        <name>FAD</name>
        <dbReference type="ChEBI" id="CHEBI:57692"/>
    </ligand>
</feature>
<feature type="site" description="Involved in heme-bound ligand stabilization and O-O bond activation" evidence="1">
    <location>
        <position position="29"/>
    </location>
</feature>
<feature type="site" description="Influences the redox potential of the prosthetic heme and FAD groups" evidence="1">
    <location>
        <position position="84"/>
    </location>
</feature>
<feature type="site" description="Influences the redox potential of the prosthetic heme and FAD groups" evidence="1">
    <location>
        <position position="389"/>
    </location>
</feature>
<reference key="1">
    <citation type="journal article" date="1999" name="Science">
        <title>Genome sequence of the radioresistant bacterium Deinococcus radiodurans R1.</title>
        <authorList>
            <person name="White O."/>
            <person name="Eisen J.A."/>
            <person name="Heidelberg J.F."/>
            <person name="Hickey E.K."/>
            <person name="Peterson J.D."/>
            <person name="Dodson R.J."/>
            <person name="Haft D.H."/>
            <person name="Gwinn M.L."/>
            <person name="Nelson W.C."/>
            <person name="Richardson D.L."/>
            <person name="Moffat K.S."/>
            <person name="Qin H."/>
            <person name="Jiang L."/>
            <person name="Pamphile W."/>
            <person name="Crosby M."/>
            <person name="Shen M."/>
            <person name="Vamathevan J.J."/>
            <person name="Lam P."/>
            <person name="McDonald L.A."/>
            <person name="Utterback T.R."/>
            <person name="Zalewski C."/>
            <person name="Makarova K.S."/>
            <person name="Aravind L."/>
            <person name="Daly M.J."/>
            <person name="Minton K.W."/>
            <person name="Fleischmann R.D."/>
            <person name="Ketchum K.A."/>
            <person name="Nelson K.E."/>
            <person name="Salzberg S.L."/>
            <person name="Smith H.O."/>
            <person name="Venter J.C."/>
            <person name="Fraser C.M."/>
        </authorList>
    </citation>
    <scope>NUCLEOTIDE SEQUENCE [LARGE SCALE GENOMIC DNA]</scope>
    <source>
        <strain>ATCC 13939 / DSM 20539 / JCM 16871 / CCUG 27074 / LMG 4051 / NBRC 15346 / NCIMB 9279 / VKM B-1422 / R1</strain>
    </source>
</reference>
<dbReference type="EC" id="1.14.12.17" evidence="1"/>
<dbReference type="EMBL" id="AE001825">
    <property type="protein sequence ID" value="AAF12394.1"/>
    <property type="molecule type" value="Genomic_DNA"/>
</dbReference>
<dbReference type="PIR" id="D75577">
    <property type="entry name" value="D75577"/>
</dbReference>
<dbReference type="RefSeq" id="NP_285566.1">
    <property type="nucleotide sequence ID" value="NC_001264.1"/>
</dbReference>
<dbReference type="RefSeq" id="WP_010889502.1">
    <property type="nucleotide sequence ID" value="NC_001264.1"/>
</dbReference>
<dbReference type="SMR" id="Q9RYR5"/>
<dbReference type="FunCoup" id="Q9RYR5">
    <property type="interactions" value="184"/>
</dbReference>
<dbReference type="STRING" id="243230.DR_A0243"/>
<dbReference type="PaxDb" id="243230-DR_A0243"/>
<dbReference type="EnsemblBacteria" id="AAF12394">
    <property type="protein sequence ID" value="AAF12394"/>
    <property type="gene ID" value="DR_A0243"/>
</dbReference>
<dbReference type="GeneID" id="69519137"/>
<dbReference type="KEGG" id="dra:DR_A0243"/>
<dbReference type="PATRIC" id="fig|243230.17.peg.3133"/>
<dbReference type="eggNOG" id="COG1017">
    <property type="taxonomic scope" value="Bacteria"/>
</dbReference>
<dbReference type="eggNOG" id="COG1018">
    <property type="taxonomic scope" value="Bacteria"/>
</dbReference>
<dbReference type="HOGENOM" id="CLU_003827_12_0_0"/>
<dbReference type="InParanoid" id="Q9RYR5"/>
<dbReference type="OrthoDB" id="9801223at2"/>
<dbReference type="Proteomes" id="UP000002524">
    <property type="component" value="Chromosome 2"/>
</dbReference>
<dbReference type="GO" id="GO:0005737">
    <property type="term" value="C:cytoplasm"/>
    <property type="evidence" value="ECO:0000318"/>
    <property type="project" value="GO_Central"/>
</dbReference>
<dbReference type="GO" id="GO:0071949">
    <property type="term" value="F:FAD binding"/>
    <property type="evidence" value="ECO:0000318"/>
    <property type="project" value="GO_Central"/>
</dbReference>
<dbReference type="GO" id="GO:0020037">
    <property type="term" value="F:heme binding"/>
    <property type="evidence" value="ECO:0007669"/>
    <property type="project" value="InterPro"/>
</dbReference>
<dbReference type="GO" id="GO:0046872">
    <property type="term" value="F:metal ion binding"/>
    <property type="evidence" value="ECO:0007669"/>
    <property type="project" value="UniProtKB-KW"/>
</dbReference>
<dbReference type="GO" id="GO:0008941">
    <property type="term" value="F:nitric oxide dioxygenase NAD(P)H activity"/>
    <property type="evidence" value="ECO:0000318"/>
    <property type="project" value="GO_Central"/>
</dbReference>
<dbReference type="GO" id="GO:0019825">
    <property type="term" value="F:oxygen binding"/>
    <property type="evidence" value="ECO:0007669"/>
    <property type="project" value="InterPro"/>
</dbReference>
<dbReference type="GO" id="GO:0005344">
    <property type="term" value="F:oxygen carrier activity"/>
    <property type="evidence" value="ECO:0007669"/>
    <property type="project" value="UniProtKB-UniRule"/>
</dbReference>
<dbReference type="GO" id="GO:0071500">
    <property type="term" value="P:cellular response to nitrosative stress"/>
    <property type="evidence" value="ECO:0000318"/>
    <property type="project" value="GO_Central"/>
</dbReference>
<dbReference type="GO" id="GO:0046210">
    <property type="term" value="P:nitric oxide catabolic process"/>
    <property type="evidence" value="ECO:0000318"/>
    <property type="project" value="GO_Central"/>
</dbReference>
<dbReference type="CDD" id="cd08922">
    <property type="entry name" value="FHb-globin"/>
    <property type="match status" value="1"/>
</dbReference>
<dbReference type="CDD" id="cd06184">
    <property type="entry name" value="flavohem_like_fad_nad_binding"/>
    <property type="match status" value="1"/>
</dbReference>
<dbReference type="FunFam" id="1.10.490.10:FF:000003">
    <property type="entry name" value="Flavohemoprotein"/>
    <property type="match status" value="1"/>
</dbReference>
<dbReference type="FunFam" id="2.40.30.10:FF:000034">
    <property type="entry name" value="Flavohemoprotein"/>
    <property type="match status" value="1"/>
</dbReference>
<dbReference type="FunFam" id="3.40.50.80:FF:000010">
    <property type="entry name" value="Flavohemoprotein"/>
    <property type="match status" value="1"/>
</dbReference>
<dbReference type="Gene3D" id="1.10.490.10">
    <property type="entry name" value="Globins"/>
    <property type="match status" value="1"/>
</dbReference>
<dbReference type="Gene3D" id="3.40.50.80">
    <property type="entry name" value="Nucleotide-binding domain of ferredoxin-NADP reductase (FNR) module"/>
    <property type="match status" value="1"/>
</dbReference>
<dbReference type="Gene3D" id="2.40.30.10">
    <property type="entry name" value="Translation factors"/>
    <property type="match status" value="1"/>
</dbReference>
<dbReference type="HAMAP" id="MF_01252">
    <property type="entry name" value="Hmp"/>
    <property type="match status" value="1"/>
</dbReference>
<dbReference type="InterPro" id="IPR008333">
    <property type="entry name" value="Cbr1-like_FAD-bd_dom"/>
</dbReference>
<dbReference type="InterPro" id="IPR017927">
    <property type="entry name" value="FAD-bd_FR_type"/>
</dbReference>
<dbReference type="InterPro" id="IPR001709">
    <property type="entry name" value="Flavoprot_Pyr_Nucl_cyt_Rdtase"/>
</dbReference>
<dbReference type="InterPro" id="IPR039261">
    <property type="entry name" value="FNR_nucleotide-bd"/>
</dbReference>
<dbReference type="InterPro" id="IPR000971">
    <property type="entry name" value="Globin"/>
</dbReference>
<dbReference type="InterPro" id="IPR009050">
    <property type="entry name" value="Globin-like_sf"/>
</dbReference>
<dbReference type="InterPro" id="IPR012292">
    <property type="entry name" value="Globin/Proto"/>
</dbReference>
<dbReference type="InterPro" id="IPR023950">
    <property type="entry name" value="Hmp"/>
</dbReference>
<dbReference type="InterPro" id="IPR001433">
    <property type="entry name" value="OxRdtase_FAD/NAD-bd"/>
</dbReference>
<dbReference type="InterPro" id="IPR017938">
    <property type="entry name" value="Riboflavin_synthase-like_b-brl"/>
</dbReference>
<dbReference type="NCBIfam" id="NF009805">
    <property type="entry name" value="PRK13289.1"/>
    <property type="match status" value="1"/>
</dbReference>
<dbReference type="PANTHER" id="PTHR43396">
    <property type="entry name" value="FLAVOHEMOPROTEIN"/>
    <property type="match status" value="1"/>
</dbReference>
<dbReference type="PANTHER" id="PTHR43396:SF3">
    <property type="entry name" value="FLAVOHEMOPROTEIN"/>
    <property type="match status" value="1"/>
</dbReference>
<dbReference type="Pfam" id="PF00970">
    <property type="entry name" value="FAD_binding_6"/>
    <property type="match status" value="1"/>
</dbReference>
<dbReference type="Pfam" id="PF00042">
    <property type="entry name" value="Globin"/>
    <property type="match status" value="1"/>
</dbReference>
<dbReference type="Pfam" id="PF00175">
    <property type="entry name" value="NAD_binding_1"/>
    <property type="match status" value="1"/>
</dbReference>
<dbReference type="PRINTS" id="PR00371">
    <property type="entry name" value="FPNCR"/>
</dbReference>
<dbReference type="PRINTS" id="PR00409">
    <property type="entry name" value="PHDIOXRDTASE"/>
</dbReference>
<dbReference type="SUPFAM" id="SSF52343">
    <property type="entry name" value="Ferredoxin reductase-like, C-terminal NADP-linked domain"/>
    <property type="match status" value="1"/>
</dbReference>
<dbReference type="SUPFAM" id="SSF46458">
    <property type="entry name" value="Globin-like"/>
    <property type="match status" value="1"/>
</dbReference>
<dbReference type="SUPFAM" id="SSF63380">
    <property type="entry name" value="Riboflavin synthase domain-like"/>
    <property type="match status" value="1"/>
</dbReference>
<dbReference type="PROSITE" id="PS51384">
    <property type="entry name" value="FAD_FR"/>
    <property type="match status" value="1"/>
</dbReference>
<dbReference type="PROSITE" id="PS01033">
    <property type="entry name" value="GLOBIN"/>
    <property type="match status" value="1"/>
</dbReference>
<keyword id="KW-0274">FAD</keyword>
<keyword id="KW-0285">Flavoprotein</keyword>
<keyword id="KW-0349">Heme</keyword>
<keyword id="KW-0408">Iron</keyword>
<keyword id="KW-0479">Metal-binding</keyword>
<keyword id="KW-0520">NAD</keyword>
<keyword id="KW-0521">NADP</keyword>
<keyword id="KW-0560">Oxidoreductase</keyword>
<keyword id="KW-0561">Oxygen transport</keyword>
<keyword id="KW-1185">Reference proteome</keyword>
<keyword id="KW-0813">Transport</keyword>
<organism>
    <name type="scientific">Deinococcus radiodurans (strain ATCC 13939 / DSM 20539 / JCM 16871 / CCUG 27074 / LMG 4051 / NBRC 15346 / NCIMB 9279 / VKM B-1422 / R1)</name>
    <dbReference type="NCBI Taxonomy" id="243230"/>
    <lineage>
        <taxon>Bacteria</taxon>
        <taxon>Thermotogati</taxon>
        <taxon>Deinococcota</taxon>
        <taxon>Deinococci</taxon>
        <taxon>Deinococcales</taxon>
        <taxon>Deinococcaceae</taxon>
        <taxon>Deinococcus</taxon>
    </lineage>
</organism>
<evidence type="ECO:0000255" key="1">
    <source>
        <dbReference type="HAMAP-Rule" id="MF_01252"/>
    </source>
</evidence>
<evidence type="ECO:0000255" key="2">
    <source>
        <dbReference type="PROSITE-ProRule" id="PRU00238"/>
    </source>
</evidence>
<proteinExistence type="inferred from homology"/>
<gene>
    <name evidence="1" type="primary">hmp</name>
    <name type="ordered locus">DR_A0243</name>
</gene>